<accession>Q9H3Y6</accession>
<reference key="1">
    <citation type="journal article" date="2001" name="Nature">
        <title>The DNA sequence and comparative analysis of human chromosome 20.</title>
        <authorList>
            <person name="Deloukas P."/>
            <person name="Matthews L.H."/>
            <person name="Ashurst J.L."/>
            <person name="Burton J."/>
            <person name="Gilbert J.G.R."/>
            <person name="Jones M."/>
            <person name="Stavrides G."/>
            <person name="Almeida J.P."/>
            <person name="Babbage A.K."/>
            <person name="Bagguley C.L."/>
            <person name="Bailey J."/>
            <person name="Barlow K.F."/>
            <person name="Bates K.N."/>
            <person name="Beard L.M."/>
            <person name="Beare D.M."/>
            <person name="Beasley O.P."/>
            <person name="Bird C.P."/>
            <person name="Blakey S.E."/>
            <person name="Bridgeman A.M."/>
            <person name="Brown A.J."/>
            <person name="Buck D."/>
            <person name="Burrill W.D."/>
            <person name="Butler A.P."/>
            <person name="Carder C."/>
            <person name="Carter N.P."/>
            <person name="Chapman J.C."/>
            <person name="Clamp M."/>
            <person name="Clark G."/>
            <person name="Clark L.N."/>
            <person name="Clark S.Y."/>
            <person name="Clee C.M."/>
            <person name="Clegg S."/>
            <person name="Cobley V.E."/>
            <person name="Collier R.E."/>
            <person name="Connor R.E."/>
            <person name="Corby N.R."/>
            <person name="Coulson A."/>
            <person name="Coville G.J."/>
            <person name="Deadman R."/>
            <person name="Dhami P.D."/>
            <person name="Dunn M."/>
            <person name="Ellington A.G."/>
            <person name="Frankland J.A."/>
            <person name="Fraser A."/>
            <person name="French L."/>
            <person name="Garner P."/>
            <person name="Grafham D.V."/>
            <person name="Griffiths C."/>
            <person name="Griffiths M.N.D."/>
            <person name="Gwilliam R."/>
            <person name="Hall R.E."/>
            <person name="Hammond S."/>
            <person name="Harley J.L."/>
            <person name="Heath P.D."/>
            <person name="Ho S."/>
            <person name="Holden J.L."/>
            <person name="Howden P.J."/>
            <person name="Huckle E."/>
            <person name="Hunt A.R."/>
            <person name="Hunt S.E."/>
            <person name="Jekosch K."/>
            <person name="Johnson C.M."/>
            <person name="Johnson D."/>
            <person name="Kay M.P."/>
            <person name="Kimberley A.M."/>
            <person name="King A."/>
            <person name="Knights A."/>
            <person name="Laird G.K."/>
            <person name="Lawlor S."/>
            <person name="Lehvaeslaiho M.H."/>
            <person name="Leversha M.A."/>
            <person name="Lloyd C."/>
            <person name="Lloyd D.M."/>
            <person name="Lovell J.D."/>
            <person name="Marsh V.L."/>
            <person name="Martin S.L."/>
            <person name="McConnachie L.J."/>
            <person name="McLay K."/>
            <person name="McMurray A.A."/>
            <person name="Milne S.A."/>
            <person name="Mistry D."/>
            <person name="Moore M.J.F."/>
            <person name="Mullikin J.C."/>
            <person name="Nickerson T."/>
            <person name="Oliver K."/>
            <person name="Parker A."/>
            <person name="Patel R."/>
            <person name="Pearce T.A.V."/>
            <person name="Peck A.I."/>
            <person name="Phillimore B.J.C.T."/>
            <person name="Prathalingam S.R."/>
            <person name="Plumb R.W."/>
            <person name="Ramsay H."/>
            <person name="Rice C.M."/>
            <person name="Ross M.T."/>
            <person name="Scott C.E."/>
            <person name="Sehra H.K."/>
            <person name="Shownkeen R."/>
            <person name="Sims S."/>
            <person name="Skuce C.D."/>
            <person name="Smith M.L."/>
            <person name="Soderlund C."/>
            <person name="Steward C.A."/>
            <person name="Sulston J.E."/>
            <person name="Swann R.M."/>
            <person name="Sycamore N."/>
            <person name="Taylor R."/>
            <person name="Tee L."/>
            <person name="Thomas D.W."/>
            <person name="Thorpe A."/>
            <person name="Tracey A."/>
            <person name="Tromans A.C."/>
            <person name="Vaudin M."/>
            <person name="Wall M."/>
            <person name="Wallis J.M."/>
            <person name="Whitehead S.L."/>
            <person name="Whittaker P."/>
            <person name="Willey D.L."/>
            <person name="Williams L."/>
            <person name="Williams S.A."/>
            <person name="Wilming L."/>
            <person name="Wray P.W."/>
            <person name="Hubbard T."/>
            <person name="Durbin R.M."/>
            <person name="Bentley D.R."/>
            <person name="Beck S."/>
            <person name="Rogers J."/>
        </authorList>
    </citation>
    <scope>NUCLEOTIDE SEQUENCE [LARGE SCALE GENOMIC DNA]</scope>
</reference>
<reference key="2">
    <citation type="journal article" date="2013" name="FEBS J.">
        <title>The unique N-terminal region of SRMS regulates enzymatic activity and phosphorylation of its novel substrate Dok1.</title>
        <authorList>
            <person name="Goel R.K."/>
            <person name="Miah S."/>
            <person name="Black K."/>
            <person name="Kalra N."/>
            <person name="Dai C."/>
            <person name="Lukong K.E."/>
        </authorList>
    </citation>
    <scope>FUNCTION</scope>
    <scope>CATALYTIC ACTIVITY</scope>
    <scope>SUBCELLULAR LOCATION</scope>
    <scope>INTERACTION WITH DOK1</scope>
    <scope>DOMAIN</scope>
    <scope>PHOSPHORYLATION AT TYR-380</scope>
    <scope>MUTAGENESIS OF TRP-223; LYS-258 AND TYR-380</scope>
</reference>
<reference key="3">
    <citation type="journal article" date="2018" name="Mol. Cell. Proteomics">
        <title>Phosphoproteomics analysis identifies novel candidate substrates of the non-receptor tyrosine kinase, SRMS.</title>
        <authorList>
            <person name="Goel R.K."/>
            <person name="Paczkowska M."/>
            <person name="Reimand J."/>
            <person name="Napper S."/>
            <person name="Lukong K.E."/>
        </authorList>
    </citation>
    <scope>FUNCTION</scope>
    <scope>CATALYTIC ACTIVITY</scope>
    <scope>INTERACTION WITH KHDRBS1 AND VIM</scope>
    <scope>SUBCELLULAR LOCATION</scope>
    <scope>MUTAGENESIS OF LYS-258</scope>
</reference>
<reference key="4">
    <citation type="journal article" date="2023" name="Cell Death Differ.">
        <title>Phosphorylation of OTUB1 at Tyr 26 stabilizes the mTORC1 component, Raptor.</title>
        <authorList>
            <person name="Seo S.U."/>
            <person name="Woo S.M."/>
            <person name="Kim M.W."/>
            <person name="Lee E.W."/>
            <person name="Min K.J."/>
            <person name="Kwon T.K."/>
        </authorList>
    </citation>
    <scope>FUNCTION</scope>
    <scope>CATALYTIC ACTIVITY</scope>
</reference>
<reference key="5">
    <citation type="journal article" date="2007" name="Nature">
        <title>Patterns of somatic mutation in human cancer genomes.</title>
        <authorList>
            <person name="Greenman C."/>
            <person name="Stephens P."/>
            <person name="Smith R."/>
            <person name="Dalgliesh G.L."/>
            <person name="Hunter C."/>
            <person name="Bignell G."/>
            <person name="Davies H."/>
            <person name="Teague J."/>
            <person name="Butler A."/>
            <person name="Stevens C."/>
            <person name="Edkins S."/>
            <person name="O'Meara S."/>
            <person name="Vastrik I."/>
            <person name="Schmidt E.E."/>
            <person name="Avis T."/>
            <person name="Barthorpe S."/>
            <person name="Bhamra G."/>
            <person name="Buck G."/>
            <person name="Choudhury B."/>
            <person name="Clements J."/>
            <person name="Cole J."/>
            <person name="Dicks E."/>
            <person name="Forbes S."/>
            <person name="Gray K."/>
            <person name="Halliday K."/>
            <person name="Harrison R."/>
            <person name="Hills K."/>
            <person name="Hinton J."/>
            <person name="Jenkinson A."/>
            <person name="Jones D."/>
            <person name="Menzies A."/>
            <person name="Mironenko T."/>
            <person name="Perry J."/>
            <person name="Raine K."/>
            <person name="Richardson D."/>
            <person name="Shepherd R."/>
            <person name="Small A."/>
            <person name="Tofts C."/>
            <person name="Varian J."/>
            <person name="Webb T."/>
            <person name="West S."/>
            <person name="Widaa S."/>
            <person name="Yates A."/>
            <person name="Cahill D.P."/>
            <person name="Louis D.N."/>
            <person name="Goldstraw P."/>
            <person name="Nicholson A.G."/>
            <person name="Brasseur F."/>
            <person name="Looijenga L."/>
            <person name="Weber B.L."/>
            <person name="Chiew Y.-E."/>
            <person name="DeFazio A."/>
            <person name="Greaves M.F."/>
            <person name="Green A.R."/>
            <person name="Campbell P."/>
            <person name="Birney E."/>
            <person name="Easton D.F."/>
            <person name="Chenevix-Trench G."/>
            <person name="Tan M.-H."/>
            <person name="Khoo S.K."/>
            <person name="Teh B.T."/>
            <person name="Yuen S.T."/>
            <person name="Leung S.Y."/>
            <person name="Wooster R."/>
            <person name="Futreal P.A."/>
            <person name="Stratton M.R."/>
        </authorList>
    </citation>
    <scope>VARIANTS [LARGE SCALE ANALYSIS] CYS-73; ARG-75; VAL-88; LEU-301; GLU-377; VAL-397; LEU-452; THR-453; LEU-457 AND THR-465</scope>
</reference>
<dbReference type="EC" id="2.7.10.2" evidence="6 7 8"/>
<dbReference type="EMBL" id="AL121829">
    <property type="status" value="NOT_ANNOTATED_CDS"/>
    <property type="molecule type" value="Genomic_DNA"/>
</dbReference>
<dbReference type="CCDS" id="CCDS13525.1"/>
<dbReference type="RefSeq" id="NP_543013.1">
    <property type="nucleotide sequence ID" value="NM_080823.4"/>
</dbReference>
<dbReference type="SMR" id="Q9H3Y6"/>
<dbReference type="BioGRID" id="112603">
    <property type="interactions" value="39"/>
</dbReference>
<dbReference type="FunCoup" id="Q9H3Y6">
    <property type="interactions" value="45"/>
</dbReference>
<dbReference type="IntAct" id="Q9H3Y6">
    <property type="interactions" value="32"/>
</dbReference>
<dbReference type="MINT" id="Q9H3Y6"/>
<dbReference type="STRING" id="9606.ENSP00000217188"/>
<dbReference type="BindingDB" id="Q9H3Y6"/>
<dbReference type="ChEMBL" id="CHEMBL5703"/>
<dbReference type="DrugBank" id="DB12010">
    <property type="generic name" value="Fostamatinib"/>
</dbReference>
<dbReference type="DrugCentral" id="Q9H3Y6"/>
<dbReference type="iPTMnet" id="Q9H3Y6"/>
<dbReference type="PhosphoSitePlus" id="Q9H3Y6"/>
<dbReference type="BioMuta" id="SRMS"/>
<dbReference type="DMDM" id="27805732"/>
<dbReference type="CPTAC" id="CPTAC-2834"/>
<dbReference type="CPTAC" id="CPTAC-2951"/>
<dbReference type="jPOST" id="Q9H3Y6"/>
<dbReference type="MassIVE" id="Q9H3Y6"/>
<dbReference type="PaxDb" id="9606-ENSP00000217188"/>
<dbReference type="PeptideAtlas" id="Q9H3Y6"/>
<dbReference type="ProteomicsDB" id="80768"/>
<dbReference type="Antibodypedia" id="29781">
    <property type="antibodies" value="189 antibodies from 25 providers"/>
</dbReference>
<dbReference type="DNASU" id="6725"/>
<dbReference type="Ensembl" id="ENST00000217188.2">
    <property type="protein sequence ID" value="ENSP00000217188.1"/>
    <property type="gene ID" value="ENSG00000125508.4"/>
</dbReference>
<dbReference type="GeneID" id="6725"/>
<dbReference type="KEGG" id="hsa:6725"/>
<dbReference type="MANE-Select" id="ENST00000217188.2">
    <property type="protein sequence ID" value="ENSP00000217188.1"/>
    <property type="RefSeq nucleotide sequence ID" value="NM_080823.4"/>
    <property type="RefSeq protein sequence ID" value="NP_543013.1"/>
</dbReference>
<dbReference type="UCSC" id="uc002yfi.3">
    <property type="organism name" value="human"/>
</dbReference>
<dbReference type="AGR" id="HGNC:11298"/>
<dbReference type="CTD" id="6725"/>
<dbReference type="DisGeNET" id="6725"/>
<dbReference type="GeneCards" id="SRMS"/>
<dbReference type="HGNC" id="HGNC:11298">
    <property type="gene designation" value="SRMS"/>
</dbReference>
<dbReference type="HPA" id="ENSG00000125508">
    <property type="expression patterns" value="Tissue enhanced (epididymis, stomach)"/>
</dbReference>
<dbReference type="MIM" id="617797">
    <property type="type" value="gene"/>
</dbReference>
<dbReference type="neXtProt" id="NX_Q9H3Y6"/>
<dbReference type="OpenTargets" id="ENSG00000125508"/>
<dbReference type="PharmGKB" id="PA36122"/>
<dbReference type="VEuPathDB" id="HostDB:ENSG00000125508"/>
<dbReference type="eggNOG" id="KOG0197">
    <property type="taxonomic scope" value="Eukaryota"/>
</dbReference>
<dbReference type="GeneTree" id="ENSGT00940000161518"/>
<dbReference type="HOGENOM" id="CLU_000288_7_2_1"/>
<dbReference type="InParanoid" id="Q9H3Y6"/>
<dbReference type="OMA" id="DQPWYFS"/>
<dbReference type="OrthoDB" id="28230at2759"/>
<dbReference type="PAN-GO" id="Q9H3Y6">
    <property type="GO annotations" value="6 GO annotations based on evolutionary models"/>
</dbReference>
<dbReference type="PhylomeDB" id="Q9H3Y6"/>
<dbReference type="TreeFam" id="TF351634"/>
<dbReference type="BRENDA" id="2.7.10.2">
    <property type="organism ID" value="2681"/>
</dbReference>
<dbReference type="PathwayCommons" id="Q9H3Y6"/>
<dbReference type="Reactome" id="R-HSA-8849472">
    <property type="pathway name" value="PTK6 Down-Regulation"/>
</dbReference>
<dbReference type="SignaLink" id="Q9H3Y6"/>
<dbReference type="SIGNOR" id="Q9H3Y6"/>
<dbReference type="BioGRID-ORCS" id="6725">
    <property type="hits" value="13 hits in 1183 CRISPR screens"/>
</dbReference>
<dbReference type="GenomeRNAi" id="6725"/>
<dbReference type="Pharos" id="Q9H3Y6">
    <property type="development level" value="Tchem"/>
</dbReference>
<dbReference type="PRO" id="PR:Q9H3Y6"/>
<dbReference type="Proteomes" id="UP000005640">
    <property type="component" value="Chromosome 20"/>
</dbReference>
<dbReference type="RNAct" id="Q9H3Y6">
    <property type="molecule type" value="protein"/>
</dbReference>
<dbReference type="Bgee" id="ENSG00000125508">
    <property type="expression patterns" value="Expressed in mucosa of transverse colon and 69 other cell types or tissues"/>
</dbReference>
<dbReference type="GO" id="GO:0005737">
    <property type="term" value="C:cytoplasm"/>
    <property type="evidence" value="ECO:0000314"/>
    <property type="project" value="UniProtKB"/>
</dbReference>
<dbReference type="GO" id="GO:0005829">
    <property type="term" value="C:cytosol"/>
    <property type="evidence" value="ECO:0000304"/>
    <property type="project" value="Reactome"/>
</dbReference>
<dbReference type="GO" id="GO:0005886">
    <property type="term" value="C:plasma membrane"/>
    <property type="evidence" value="ECO:0000318"/>
    <property type="project" value="GO_Central"/>
</dbReference>
<dbReference type="GO" id="GO:0005524">
    <property type="term" value="F:ATP binding"/>
    <property type="evidence" value="ECO:0007669"/>
    <property type="project" value="UniProtKB-KW"/>
</dbReference>
<dbReference type="GO" id="GO:0004715">
    <property type="term" value="F:non-membrane spanning protein tyrosine kinase activity"/>
    <property type="evidence" value="ECO:0000318"/>
    <property type="project" value="GO_Central"/>
</dbReference>
<dbReference type="GO" id="GO:0004713">
    <property type="term" value="F:protein tyrosine kinase activity"/>
    <property type="evidence" value="ECO:0000314"/>
    <property type="project" value="UniProtKB"/>
</dbReference>
<dbReference type="GO" id="GO:0005102">
    <property type="term" value="F:signaling receptor binding"/>
    <property type="evidence" value="ECO:0000318"/>
    <property type="project" value="GO_Central"/>
</dbReference>
<dbReference type="GO" id="GO:0030154">
    <property type="term" value="P:cell differentiation"/>
    <property type="evidence" value="ECO:0000318"/>
    <property type="project" value="GO_Central"/>
</dbReference>
<dbReference type="GO" id="GO:0007169">
    <property type="term" value="P:cell surface receptor protein tyrosine kinase signaling pathway"/>
    <property type="evidence" value="ECO:0000318"/>
    <property type="project" value="GO_Central"/>
</dbReference>
<dbReference type="GO" id="GO:0009968">
    <property type="term" value="P:negative regulation of signal transduction"/>
    <property type="evidence" value="ECO:0000304"/>
    <property type="project" value="Reactome"/>
</dbReference>
<dbReference type="GO" id="GO:0038083">
    <property type="term" value="P:peptidyl-tyrosine autophosphorylation"/>
    <property type="evidence" value="ECO:0000314"/>
    <property type="project" value="UniProtKB"/>
</dbReference>
<dbReference type="GO" id="GO:0018108">
    <property type="term" value="P:peptidyl-tyrosine phosphorylation"/>
    <property type="evidence" value="ECO:0000314"/>
    <property type="project" value="UniProtKB"/>
</dbReference>
<dbReference type="GO" id="GO:1904263">
    <property type="term" value="P:positive regulation of TORC1 signaling"/>
    <property type="evidence" value="ECO:0000314"/>
    <property type="project" value="UniProt"/>
</dbReference>
<dbReference type="CDD" id="cd05148">
    <property type="entry name" value="PTKc_Srm_Brk"/>
    <property type="match status" value="1"/>
</dbReference>
<dbReference type="CDD" id="cd11846">
    <property type="entry name" value="SH3_Srms"/>
    <property type="match status" value="1"/>
</dbReference>
<dbReference type="FunFam" id="1.10.510.10:FF:000458">
    <property type="entry name" value="Tyrosine-protein kinase"/>
    <property type="match status" value="1"/>
</dbReference>
<dbReference type="FunFam" id="2.30.30.40:FF:000234">
    <property type="entry name" value="Tyrosine-protein kinase"/>
    <property type="match status" value="1"/>
</dbReference>
<dbReference type="FunFam" id="3.30.200.20:FF:000053">
    <property type="entry name" value="Tyrosine-protein kinase"/>
    <property type="match status" value="1"/>
</dbReference>
<dbReference type="FunFam" id="3.30.505.10:FF:000078">
    <property type="entry name" value="Tyrosine-protein kinase"/>
    <property type="match status" value="1"/>
</dbReference>
<dbReference type="Gene3D" id="3.30.505.10">
    <property type="entry name" value="SH2 domain"/>
    <property type="match status" value="1"/>
</dbReference>
<dbReference type="Gene3D" id="2.30.30.40">
    <property type="entry name" value="SH3 Domains"/>
    <property type="match status" value="1"/>
</dbReference>
<dbReference type="Gene3D" id="1.10.510.10">
    <property type="entry name" value="Transferase(Phosphotransferase) domain 1"/>
    <property type="match status" value="1"/>
</dbReference>
<dbReference type="InterPro" id="IPR011009">
    <property type="entry name" value="Kinase-like_dom_sf"/>
</dbReference>
<dbReference type="InterPro" id="IPR050198">
    <property type="entry name" value="Non-receptor_tyrosine_kinases"/>
</dbReference>
<dbReference type="InterPro" id="IPR000719">
    <property type="entry name" value="Prot_kinase_dom"/>
</dbReference>
<dbReference type="InterPro" id="IPR017441">
    <property type="entry name" value="Protein_kinase_ATP_BS"/>
</dbReference>
<dbReference type="InterPro" id="IPR001245">
    <property type="entry name" value="Ser-Thr/Tyr_kinase_cat_dom"/>
</dbReference>
<dbReference type="InterPro" id="IPR000980">
    <property type="entry name" value="SH2"/>
</dbReference>
<dbReference type="InterPro" id="IPR036860">
    <property type="entry name" value="SH2_dom_sf"/>
</dbReference>
<dbReference type="InterPro" id="IPR036028">
    <property type="entry name" value="SH3-like_dom_sf"/>
</dbReference>
<dbReference type="InterPro" id="IPR001452">
    <property type="entry name" value="SH3_domain"/>
</dbReference>
<dbReference type="InterPro" id="IPR008266">
    <property type="entry name" value="Tyr_kinase_AS"/>
</dbReference>
<dbReference type="InterPro" id="IPR020635">
    <property type="entry name" value="Tyr_kinase_cat_dom"/>
</dbReference>
<dbReference type="PANTHER" id="PTHR24418">
    <property type="entry name" value="TYROSINE-PROTEIN KINASE"/>
    <property type="match status" value="1"/>
</dbReference>
<dbReference type="Pfam" id="PF07714">
    <property type="entry name" value="PK_Tyr_Ser-Thr"/>
    <property type="match status" value="1"/>
</dbReference>
<dbReference type="Pfam" id="PF00017">
    <property type="entry name" value="SH2"/>
    <property type="match status" value="1"/>
</dbReference>
<dbReference type="PRINTS" id="PR00401">
    <property type="entry name" value="SH2DOMAIN"/>
</dbReference>
<dbReference type="PRINTS" id="PR00109">
    <property type="entry name" value="TYRKINASE"/>
</dbReference>
<dbReference type="SMART" id="SM00252">
    <property type="entry name" value="SH2"/>
    <property type="match status" value="1"/>
</dbReference>
<dbReference type="SMART" id="SM00326">
    <property type="entry name" value="SH3"/>
    <property type="match status" value="1"/>
</dbReference>
<dbReference type="SMART" id="SM00219">
    <property type="entry name" value="TyrKc"/>
    <property type="match status" value="1"/>
</dbReference>
<dbReference type="SUPFAM" id="SSF56112">
    <property type="entry name" value="Protein kinase-like (PK-like)"/>
    <property type="match status" value="1"/>
</dbReference>
<dbReference type="SUPFAM" id="SSF55550">
    <property type="entry name" value="SH2 domain"/>
    <property type="match status" value="1"/>
</dbReference>
<dbReference type="SUPFAM" id="SSF50044">
    <property type="entry name" value="SH3-domain"/>
    <property type="match status" value="1"/>
</dbReference>
<dbReference type="PROSITE" id="PS00107">
    <property type="entry name" value="PROTEIN_KINASE_ATP"/>
    <property type="match status" value="1"/>
</dbReference>
<dbReference type="PROSITE" id="PS50011">
    <property type="entry name" value="PROTEIN_KINASE_DOM"/>
    <property type="match status" value="1"/>
</dbReference>
<dbReference type="PROSITE" id="PS00109">
    <property type="entry name" value="PROTEIN_KINASE_TYR"/>
    <property type="match status" value="1"/>
</dbReference>
<dbReference type="PROSITE" id="PS50001">
    <property type="entry name" value="SH2"/>
    <property type="match status" value="1"/>
</dbReference>
<dbReference type="PROSITE" id="PS50002">
    <property type="entry name" value="SH3"/>
    <property type="match status" value="1"/>
</dbReference>
<sequence>MEPFLRRRLAFLSFFWDKIWPAGGEPDHGTPGSLDPNTDPVPTLPAEPCSPFPQLFLALYDFTARCGGELSVRRGDRLCALEEGGGYIFARRLSGQPSAGLVPITHVAKASPETLSDQPWYFSGVSRTQAQQLLLSPPNEPGAFLIRPSESSLGGYSLSVRAQAKVCHYRVSMAADGSLYLQKGRLFPGLEELLTYYKANWKLIQNPLLQPCMPQKAPRQDVWERPHSEFALGRKLGEGYFGEVWEGLWLGSLPVAIKVIKSANMKLTDLAKEIQTLKGLRHERLIRLHAVCSGGEPVYIVTELMRKGNLQAFLGTPEGRALRLPPLLGFACQVAEGMSYLEEQRVVHRDLAARNVLVDDGLACKVADFGLARLLKDDIYSPSSSSKIPVKWTAPEAANYRVFSQKSDVWSFGVLLHEVFTYGQCPYEGMTNHETLQQIMRGYRLPRPAACPAEVYVLMLECWRSSPEERPSFATLREKLHAIHRCHP</sequence>
<feature type="chain" id="PRO_0000088160" description="Tyrosine-protein kinase Srms">
    <location>
        <begin position="1"/>
        <end position="488"/>
    </location>
</feature>
<feature type="domain" description="SH3" evidence="3">
    <location>
        <begin position="51"/>
        <end position="112"/>
    </location>
</feature>
<feature type="domain" description="SH2" evidence="2">
    <location>
        <begin position="120"/>
        <end position="212"/>
    </location>
</feature>
<feature type="domain" description="Protein kinase" evidence="1">
    <location>
        <begin position="230"/>
        <end position="488"/>
    </location>
</feature>
<feature type="active site" description="Proton acceptor" evidence="1 4">
    <location>
        <position position="350"/>
    </location>
</feature>
<feature type="binding site" evidence="1">
    <location>
        <begin position="236"/>
        <end position="244"/>
    </location>
    <ligand>
        <name>ATP</name>
        <dbReference type="ChEBI" id="CHEBI:30616"/>
    </ligand>
</feature>
<feature type="binding site" evidence="1">
    <location>
        <position position="258"/>
    </location>
    <ligand>
        <name>ATP</name>
        <dbReference type="ChEBI" id="CHEBI:30616"/>
    </ligand>
</feature>
<feature type="modified residue" description="Phosphotyrosine; by autocatalysis" evidence="6">
    <location>
        <position position="380"/>
    </location>
</feature>
<feature type="sequence variant" id="VAR_041831" description="In dbSNP:rs56053583." evidence="5">
    <original>R</original>
    <variation>C</variation>
    <location>
        <position position="73"/>
    </location>
</feature>
<feature type="sequence variant" id="VAR_041832" description="In dbSNP:rs55863722." evidence="5">
    <original>G</original>
    <variation>R</variation>
    <location>
        <position position="75"/>
    </location>
</feature>
<feature type="sequence variant" id="VAR_041833" description="In dbSNP:rs35558836." evidence="5">
    <original>I</original>
    <variation>V</variation>
    <location>
        <position position="88"/>
    </location>
</feature>
<feature type="sequence variant" id="VAR_051700" description="In dbSNP:rs378483.">
    <original>P</original>
    <variation>L</variation>
    <location>
        <position position="218"/>
    </location>
</feature>
<feature type="sequence variant" id="VAR_051701" description="In dbSNP:rs34969822.">
    <original>V</original>
    <variation>M</variation>
    <location>
        <position position="255"/>
    </location>
</feature>
<feature type="sequence variant" id="VAR_041834" description="In dbSNP:rs310657." evidence="5">
    <original>V</original>
    <variation>L</variation>
    <location>
        <position position="301"/>
    </location>
</feature>
<feature type="sequence variant" id="VAR_051702" description="In dbSNP:rs8122355.">
    <original>P</original>
    <variation>L</variation>
    <location>
        <position position="325"/>
    </location>
</feature>
<feature type="sequence variant" id="VAR_041835" description="In dbSNP:rs55838540." evidence="5">
    <original>D</original>
    <variation>E</variation>
    <location>
        <position position="377"/>
    </location>
</feature>
<feature type="sequence variant" id="VAR_041836" description="In dbSNP:rs6011889." evidence="5">
    <original>A</original>
    <variation>V</variation>
    <location>
        <position position="397"/>
    </location>
</feature>
<feature type="sequence variant" id="VAR_041837" description="In dbSNP:rs8120713." evidence="5">
    <original>P</original>
    <variation>L</variation>
    <location>
        <position position="452"/>
    </location>
</feature>
<feature type="sequence variant" id="VAR_041838" description="In dbSNP:rs310655." evidence="5">
    <original>A</original>
    <variation>T</variation>
    <location>
        <position position="453"/>
    </location>
</feature>
<feature type="sequence variant" id="VAR_041839" description="In dbSNP:rs310654." evidence="5">
    <original>V</original>
    <variation>L</variation>
    <location>
        <position position="457"/>
    </location>
</feature>
<feature type="sequence variant" id="VAR_041840" description="In dbSNP:rs33933649." evidence="5">
    <original>S</original>
    <variation>T</variation>
    <location>
        <position position="465"/>
    </location>
</feature>
<feature type="mutagenesis site" description="Loss of kinase activity." evidence="6">
    <original>W</original>
    <variation>A</variation>
    <location>
        <position position="223"/>
    </location>
</feature>
<feature type="mutagenesis site" description="Loss of kinase activity. Exhibits a diffused cytoplasmic localization. No effect on interaction with KHDRBS1 or VIM but abolishes tyrosine phosphorylation of both substrates." evidence="6 7">
    <original>K</original>
    <variation>M</variation>
    <location>
        <position position="258"/>
    </location>
</feature>
<feature type="mutagenesis site" description="Significant reduction in phosphorylation." evidence="6">
    <original>Y</original>
    <variation>F</variation>
    <location>
        <position position="380"/>
    </location>
</feature>
<protein>
    <recommendedName>
        <fullName>Tyrosine-protein kinase Srms</fullName>
        <ecNumber evidence="6 7 8">2.7.10.2</ecNumber>
    </recommendedName>
</protein>
<comment type="function">
    <text evidence="6 7 8">Non-receptor tyrosine-protein kinase which phosphorylates DOK1 on tyrosine residues (PubMed:23822091). Also phosphorylates KHDRBS1/SAM68 and VIM on tyrosine residues (PubMed:29496907). Phosphorylation of KHDRBS1 is EGF-dependent (PubMed:29496907). Phosphorylates OTUB1, promoting deubiquitination of RPTOR (PubMed:35927303).</text>
</comment>
<comment type="catalytic activity">
    <reaction evidence="4 6 7 8">
        <text>L-tyrosyl-[protein] + ATP = O-phospho-L-tyrosyl-[protein] + ADP + H(+)</text>
        <dbReference type="Rhea" id="RHEA:10596"/>
        <dbReference type="Rhea" id="RHEA-COMP:10136"/>
        <dbReference type="Rhea" id="RHEA-COMP:20101"/>
        <dbReference type="ChEBI" id="CHEBI:15378"/>
        <dbReference type="ChEBI" id="CHEBI:30616"/>
        <dbReference type="ChEBI" id="CHEBI:46858"/>
        <dbReference type="ChEBI" id="CHEBI:61978"/>
        <dbReference type="ChEBI" id="CHEBI:456216"/>
        <dbReference type="EC" id="2.7.10.2"/>
    </reaction>
</comment>
<comment type="subunit">
    <text evidence="6 7">Interacts (via the SH2 and SH3 domains) with DOK1 (PubMed:23822091). Interacts with KHDRBS1/SAM68 and VIM (PubMed:29496907).</text>
</comment>
<comment type="interaction">
    <interactant intactId="EBI-8541270">
        <id>Q9H3Y6</id>
    </interactant>
    <interactant intactId="EBI-1384360">
        <id>Q99704</id>
        <label>DOK1</label>
    </interactant>
    <organismsDiffer>false</organismsDiffer>
    <experiments>7</experiments>
</comment>
<comment type="interaction">
    <interactant intactId="EBI-8541270">
        <id>Q9H3Y6</id>
    </interactant>
    <interactant intactId="EBI-713635">
        <id>O43639</id>
        <label>NCK2</label>
    </interactant>
    <organismsDiffer>false</organismsDiffer>
    <experiments>3</experiments>
</comment>
<comment type="subcellular location">
    <subcellularLocation>
        <location evidence="6 7">Cytoplasm</location>
    </subcellularLocation>
    <text evidence="6 7">Localizes to punctate cytoplasmic structures.</text>
</comment>
<comment type="tissue specificity">
    <text>Highly expressed in most breast cancers (at protein level).</text>
</comment>
<comment type="domain">
    <text evidence="6">The N-terminal region regulates its kinase activity.</text>
</comment>
<comment type="similarity">
    <text evidence="1">Belongs to the protein kinase superfamily. Tyr protein kinase family. SRC subfamily.</text>
</comment>
<organism>
    <name type="scientific">Homo sapiens</name>
    <name type="common">Human</name>
    <dbReference type="NCBI Taxonomy" id="9606"/>
    <lineage>
        <taxon>Eukaryota</taxon>
        <taxon>Metazoa</taxon>
        <taxon>Chordata</taxon>
        <taxon>Craniata</taxon>
        <taxon>Vertebrata</taxon>
        <taxon>Euteleostomi</taxon>
        <taxon>Mammalia</taxon>
        <taxon>Eutheria</taxon>
        <taxon>Euarchontoglires</taxon>
        <taxon>Primates</taxon>
        <taxon>Haplorrhini</taxon>
        <taxon>Catarrhini</taxon>
        <taxon>Hominidae</taxon>
        <taxon>Homo</taxon>
    </lineage>
</organism>
<gene>
    <name type="primary">SRMS</name>
    <name type="synonym">C20orf148</name>
</gene>
<keyword id="KW-0067">ATP-binding</keyword>
<keyword id="KW-0963">Cytoplasm</keyword>
<keyword id="KW-0418">Kinase</keyword>
<keyword id="KW-0547">Nucleotide-binding</keyword>
<keyword id="KW-0597">Phosphoprotein</keyword>
<keyword id="KW-1267">Proteomics identification</keyword>
<keyword id="KW-1185">Reference proteome</keyword>
<keyword id="KW-0727">SH2 domain</keyword>
<keyword id="KW-0728">SH3 domain</keyword>
<keyword id="KW-0808">Transferase</keyword>
<keyword id="KW-0829">Tyrosine-protein kinase</keyword>
<name>SRMS_HUMAN</name>
<proteinExistence type="evidence at protein level"/>
<evidence type="ECO:0000255" key="1">
    <source>
        <dbReference type="PROSITE-ProRule" id="PRU00159"/>
    </source>
</evidence>
<evidence type="ECO:0000255" key="2">
    <source>
        <dbReference type="PROSITE-ProRule" id="PRU00191"/>
    </source>
</evidence>
<evidence type="ECO:0000255" key="3">
    <source>
        <dbReference type="PROSITE-ProRule" id="PRU00192"/>
    </source>
</evidence>
<evidence type="ECO:0000255" key="4">
    <source>
        <dbReference type="PROSITE-ProRule" id="PRU10028"/>
    </source>
</evidence>
<evidence type="ECO:0000269" key="5">
    <source>
    </source>
</evidence>
<evidence type="ECO:0000269" key="6">
    <source>
    </source>
</evidence>
<evidence type="ECO:0000269" key="7">
    <source>
    </source>
</evidence>
<evidence type="ECO:0000269" key="8">
    <source>
    </source>
</evidence>